<comment type="function">
    <text evidence="1">Forms an icosahedral capsid with a T=7 symmetry and a 50 nm diameter. The capsid is composed of 72 pentamers linked to each other by disulfide bonds and associated with L2 proteins. Binds to heparan sulfate proteoglycans on cell surface of basal layer keratinocytes to provide initial virion attachment. This binding mediates a conformational change in the virus capsid that facilitates efficient infection. The virion enters the host cell via endocytosis. During virus trafficking, L1 protein dissociates from the viral DNA and the genomic DNA is released to the host nucleus. The virion assembly takes place within the cell nucleus. Encapsulates the genomic DNA together with protein L2.</text>
</comment>
<comment type="subunit">
    <text evidence="1">Self-assembles into homopentamers. The capsid has an icosahedral symmetry and consists of 72 capsomers, with each capsomer being a pentamer of L1. Interacts with the minor capsid protein L2; this interaction is necessary for viral genome encapsidation. Interacts with protein E2; this interaction enhances E2-dependent replication and transcription activation.</text>
</comment>
<comment type="subcellular location">
    <subcellularLocation>
        <location evidence="1">Virion</location>
    </subcellularLocation>
    <subcellularLocation>
        <location evidence="1">Host nucleus</location>
    </subcellularLocation>
</comment>
<comment type="similarity">
    <text evidence="1">Belongs to the papillomaviridae L1 protein family.</text>
</comment>
<sequence length="501" mass="55635">MSMWRPSDSKVYLPPVPVSKVVSTDEYVSRTSIYYHAGSSRLLAVGHPYYAVKKGNNKVSVPKVSGLQYRVFRVRLPDPNKFGLPDANFYDPNTQRLVWACLGVEVGRGQPLGVGTSGHPLLNKLDDTENGPKVAGGQGADNRECVSMDYKQTQLCMLGCKPPVGEHWGKGNPCTTGAAGDCPALELVNSVIQDGDMVDTGYGAMDFNALQANKSDVPIDICTSVCKYPDYLKMASDPYGDSLFFYLRREQMFVRHLFNRAGTMGDSVPDDLYIKGSGSNVKLASHVFYPTPSGSMVTSDAQLFNKPYWLQKAQGHNNGICWGNQVFLTVVDTTRSTNMTLCASTASTVTTPYNNESFKEYLRHVEEFDLQFIFQLCKVTLNTEVMAYIHSMDASILEDWNFGLQPPPSGSLQDTYRFVTSAAITCQKPAPPKEKEDPLAKYTFWEVDLKEKFSADLDQFPLGRKFLLQAGMRARPTLRAPKRTASSTSSSSPRKRKRTKR</sequence>
<reference key="1">
    <citation type="journal article" date="1991" name="Virology">
        <title>Characterization of the complete RhPV 1 genomic sequence and an integration locus from a metastatic tumor.</title>
        <authorList>
            <person name="Ostrow R.S."/>
            <person name="Labresh K.V."/>
            <person name="Faras A.J."/>
        </authorList>
    </citation>
    <scope>NUCLEOTIDE SEQUENCE [GENOMIC DNA]</scope>
</reference>
<keyword id="KW-0167">Capsid protein</keyword>
<keyword id="KW-1015">Disulfide bond</keyword>
<keyword id="KW-1048">Host nucleus</keyword>
<keyword id="KW-0945">Host-virus interaction</keyword>
<keyword id="KW-0426">Late protein</keyword>
<keyword id="KW-1185">Reference proteome</keyword>
<keyword id="KW-1145">T=7 icosahedral capsid protein</keyword>
<keyword id="KW-1161">Viral attachment to host cell</keyword>
<keyword id="KW-1162">Viral penetration into host cytoplasm</keyword>
<keyword id="KW-0946">Virion</keyword>
<keyword id="KW-1164">Virus endocytosis by host</keyword>
<keyword id="KW-1160">Virus entry into host cell</keyword>
<organism>
    <name type="scientific">Macaca mulata papillomavirus 1</name>
    <name type="common">Rhpv 1</name>
    <name type="synonym">Rhesus papillomavirus type 1</name>
    <dbReference type="NCBI Taxonomy" id="2779844"/>
    <lineage>
        <taxon>Viruses</taxon>
        <taxon>Monodnaviria</taxon>
        <taxon>Shotokuvirae</taxon>
        <taxon>Cossaviricota</taxon>
        <taxon>Papovaviricetes</taxon>
        <taxon>Zurhausenvirales</taxon>
        <taxon>Papillomaviridae</taxon>
        <taxon>Firstpapillomavirinae</taxon>
        <taxon>Alphapapillomavirus</taxon>
        <taxon>Rhesus papillomavirus type 1</taxon>
    </lineage>
</organism>
<protein>
    <recommendedName>
        <fullName evidence="1">Major capsid protein L1</fullName>
    </recommendedName>
</protein>
<proteinExistence type="inferred from homology"/>
<feature type="chain" id="PRO_0000133559" description="Major capsid protein L1">
    <location>
        <begin position="1"/>
        <end position="501"/>
    </location>
</feature>
<feature type="region of interest" description="Disordered" evidence="2">
    <location>
        <begin position="473"/>
        <end position="501"/>
    </location>
</feature>
<feature type="compositionally biased region" description="Low complexity" evidence="2">
    <location>
        <begin position="483"/>
        <end position="492"/>
    </location>
</feature>
<feature type="disulfide bond" description="Interchain (with C-426)" evidence="1">
    <location>
        <position position="174"/>
    </location>
</feature>
<feature type="disulfide bond" description="Interchain (with C-174)" evidence="1">
    <location>
        <position position="426"/>
    </location>
</feature>
<accession>P22163</accession>
<organismHost>
    <name type="scientific">Macaca mulatta</name>
    <name type="common">Rhesus macaque</name>
    <dbReference type="NCBI Taxonomy" id="9544"/>
</organismHost>
<name>VL1_MMPV1</name>
<dbReference type="EMBL" id="M60184">
    <property type="protein sequence ID" value="AAA79318.1"/>
    <property type="molecule type" value="Genomic_DNA"/>
</dbReference>
<dbReference type="PIR" id="H38503">
    <property type="entry name" value="P1WLR1"/>
</dbReference>
<dbReference type="RefSeq" id="NP_043338.1">
    <property type="nucleotide sequence ID" value="NC_001678.1"/>
</dbReference>
<dbReference type="SMR" id="P22163"/>
<dbReference type="GeneID" id="1489013"/>
<dbReference type="KEGG" id="vg:1489013"/>
<dbReference type="Proteomes" id="UP000008169">
    <property type="component" value="Genome"/>
</dbReference>
<dbReference type="GO" id="GO:0042025">
    <property type="term" value="C:host cell nucleus"/>
    <property type="evidence" value="ECO:0007669"/>
    <property type="project" value="UniProtKB-SubCell"/>
</dbReference>
<dbReference type="GO" id="GO:0039620">
    <property type="term" value="C:T=7 icosahedral viral capsid"/>
    <property type="evidence" value="ECO:0007669"/>
    <property type="project" value="UniProtKB-UniRule"/>
</dbReference>
<dbReference type="GO" id="GO:0005198">
    <property type="term" value="F:structural molecule activity"/>
    <property type="evidence" value="ECO:0007669"/>
    <property type="project" value="UniProtKB-UniRule"/>
</dbReference>
<dbReference type="GO" id="GO:0075509">
    <property type="term" value="P:endocytosis involved in viral entry into host cell"/>
    <property type="evidence" value="ECO:0007669"/>
    <property type="project" value="UniProtKB-KW"/>
</dbReference>
<dbReference type="GO" id="GO:0019062">
    <property type="term" value="P:virion attachment to host cell"/>
    <property type="evidence" value="ECO:0007669"/>
    <property type="project" value="UniProtKB-UniRule"/>
</dbReference>
<dbReference type="Gene3D" id="2.60.175.20">
    <property type="entry name" value="Major capsid L1 (late) superfamily, Papillomavirus"/>
    <property type="match status" value="2"/>
</dbReference>
<dbReference type="HAMAP" id="MF_04002">
    <property type="entry name" value="PPV_L1"/>
    <property type="match status" value="1"/>
</dbReference>
<dbReference type="InterPro" id="IPR002210">
    <property type="entry name" value="Capsid_L1_Papillomavir"/>
</dbReference>
<dbReference type="InterPro" id="IPR036973">
    <property type="entry name" value="Capsid_L1_sf_Papillomavir"/>
</dbReference>
<dbReference type="InterPro" id="IPR011222">
    <property type="entry name" value="dsDNA_vir_gr_I_capsid"/>
</dbReference>
<dbReference type="Pfam" id="PF00500">
    <property type="entry name" value="Late_protein_L1"/>
    <property type="match status" value="1"/>
</dbReference>
<dbReference type="PRINTS" id="PR00865">
    <property type="entry name" value="HPVCAPSIDL1"/>
</dbReference>
<dbReference type="SUPFAM" id="SSF88648">
    <property type="entry name" value="Group I dsDNA viruses"/>
    <property type="match status" value="1"/>
</dbReference>
<gene>
    <name evidence="1" type="primary">L1</name>
</gene>
<evidence type="ECO:0000255" key="1">
    <source>
        <dbReference type="HAMAP-Rule" id="MF_04002"/>
    </source>
</evidence>
<evidence type="ECO:0000256" key="2">
    <source>
        <dbReference type="SAM" id="MobiDB-lite"/>
    </source>
</evidence>